<keyword id="KW-0963">Cytoplasm</keyword>
<keyword id="KW-0489">Methyltransferase</keyword>
<keyword id="KW-0698">rRNA processing</keyword>
<keyword id="KW-0949">S-adenosyl-L-methionine</keyword>
<keyword id="KW-0808">Transferase</keyword>
<reference key="1">
    <citation type="journal article" date="2011" name="Appl. Environ. Microbiol.">
        <title>Genomic potential of Marinobacter aquaeolei, a biogeochemical 'opportunitroph'.</title>
        <authorList>
            <person name="Singer E."/>
            <person name="Webb E.A."/>
            <person name="Nelson W.C."/>
            <person name="Heidelberg J.F."/>
            <person name="Ivanova N."/>
            <person name="Pati A."/>
            <person name="Edwards K.J."/>
        </authorList>
    </citation>
    <scope>NUCLEOTIDE SEQUENCE [LARGE SCALE GENOMIC DNA]</scope>
    <source>
        <strain>ATCC 700491 / DSM 11845 / VT8</strain>
    </source>
</reference>
<sequence>MQQIMLMCRPGFETEAGQELMDSAAACGLFGYFQPIRNAGLVRFTLGGPESAFELMQRIPLDELVFVRDWFLVIGDCPLPARDRVGAVIEFLRGADWQGSLASRLETRLTETNEDRDLGNFARKWVAPLSRGLREADMLAQDSASAKGDRLELLLLDFETAVVGLSLADNRSPFPQGIPRLRLPASAPSRSALKLEEAWKVFIPEDRYLDYLGGGRKAVDLGAAPGGWTWQLVQQGMMVTAVDNGPMNPELMATGHVEHVRADGYAWRPKRAVDWMVCDIVDKPRKTARLALDWVGGKLCRYTVFNLKLPMKKRYEEWLICRDILLQGLAEAELNCRLRARHLYHDREEITCFIERLD</sequence>
<dbReference type="EC" id="2.1.1.186" evidence="1"/>
<dbReference type="EMBL" id="CP000514">
    <property type="protein sequence ID" value="ABM18863.1"/>
    <property type="molecule type" value="Genomic_DNA"/>
</dbReference>
<dbReference type="RefSeq" id="WP_011785261.1">
    <property type="nucleotide sequence ID" value="NC_008740.1"/>
</dbReference>
<dbReference type="SMR" id="A1U1J4"/>
<dbReference type="STRING" id="351348.Maqu_1781"/>
<dbReference type="GeneID" id="31820991"/>
<dbReference type="KEGG" id="maq:Maqu_1781"/>
<dbReference type="eggNOG" id="COG2933">
    <property type="taxonomic scope" value="Bacteria"/>
</dbReference>
<dbReference type="HOGENOM" id="CLU_043780_0_0_6"/>
<dbReference type="OrthoDB" id="154490at2"/>
<dbReference type="Proteomes" id="UP000000998">
    <property type="component" value="Chromosome"/>
</dbReference>
<dbReference type="GO" id="GO:0005737">
    <property type="term" value="C:cytoplasm"/>
    <property type="evidence" value="ECO:0007669"/>
    <property type="project" value="UniProtKB-SubCell"/>
</dbReference>
<dbReference type="GO" id="GO:0008757">
    <property type="term" value="F:S-adenosylmethionine-dependent methyltransferase activity"/>
    <property type="evidence" value="ECO:0007669"/>
    <property type="project" value="UniProtKB-UniRule"/>
</dbReference>
<dbReference type="GO" id="GO:0032259">
    <property type="term" value="P:methylation"/>
    <property type="evidence" value="ECO:0007669"/>
    <property type="project" value="UniProtKB-KW"/>
</dbReference>
<dbReference type="GO" id="GO:0006364">
    <property type="term" value="P:rRNA processing"/>
    <property type="evidence" value="ECO:0007669"/>
    <property type="project" value="UniProtKB-UniRule"/>
</dbReference>
<dbReference type="Gene3D" id="3.30.2300.20">
    <property type="match status" value="1"/>
</dbReference>
<dbReference type="Gene3D" id="3.30.70.2810">
    <property type="match status" value="1"/>
</dbReference>
<dbReference type="Gene3D" id="3.40.50.150">
    <property type="entry name" value="Vaccinia Virus protein VP39"/>
    <property type="match status" value="1"/>
</dbReference>
<dbReference type="HAMAP" id="MF_01551">
    <property type="entry name" value="23SrRNA_methyltr_M"/>
    <property type="match status" value="1"/>
</dbReference>
<dbReference type="InterPro" id="IPR040739">
    <property type="entry name" value="RlmM_FDX"/>
</dbReference>
<dbReference type="InterPro" id="IPR048646">
    <property type="entry name" value="RlmM_THUMP-like"/>
</dbReference>
<dbReference type="InterPro" id="IPR002877">
    <property type="entry name" value="RNA_MeTrfase_FtsJ_dom"/>
</dbReference>
<dbReference type="InterPro" id="IPR011224">
    <property type="entry name" value="rRNA_MeTrfase_M"/>
</dbReference>
<dbReference type="InterPro" id="IPR029063">
    <property type="entry name" value="SAM-dependent_MTases_sf"/>
</dbReference>
<dbReference type="NCBIfam" id="NF008734">
    <property type="entry name" value="PRK11760.1"/>
    <property type="match status" value="1"/>
</dbReference>
<dbReference type="PANTHER" id="PTHR37524">
    <property type="entry name" value="RIBOSOMAL RNA LARGE SUBUNIT METHYLTRANSFERASE M"/>
    <property type="match status" value="1"/>
</dbReference>
<dbReference type="PANTHER" id="PTHR37524:SF2">
    <property type="entry name" value="RIBOSOMAL RNA METHYLTRANSFERASE FTSJ DOMAIN-CONTAINING PROTEIN"/>
    <property type="match status" value="1"/>
</dbReference>
<dbReference type="Pfam" id="PF01728">
    <property type="entry name" value="FtsJ"/>
    <property type="match status" value="1"/>
</dbReference>
<dbReference type="Pfam" id="PF18125">
    <property type="entry name" value="RlmM_FDX"/>
    <property type="match status" value="1"/>
</dbReference>
<dbReference type="Pfam" id="PF21239">
    <property type="entry name" value="RLMM_N"/>
    <property type="match status" value="1"/>
</dbReference>
<dbReference type="PIRSF" id="PIRSF028774">
    <property type="entry name" value="UCP028774"/>
    <property type="match status" value="1"/>
</dbReference>
<dbReference type="SUPFAM" id="SSF53335">
    <property type="entry name" value="S-adenosyl-L-methionine-dependent methyltransferases"/>
    <property type="match status" value="1"/>
</dbReference>
<comment type="function">
    <text evidence="1">Catalyzes the 2'-O-methylation at nucleotide C2498 in 23S rRNA.</text>
</comment>
<comment type="catalytic activity">
    <reaction evidence="1">
        <text>cytidine(2498) in 23S rRNA + S-adenosyl-L-methionine = 2'-O-methylcytidine(2498) in 23S rRNA + S-adenosyl-L-homocysteine + H(+)</text>
        <dbReference type="Rhea" id="RHEA:42788"/>
        <dbReference type="Rhea" id="RHEA-COMP:10244"/>
        <dbReference type="Rhea" id="RHEA-COMP:10245"/>
        <dbReference type="ChEBI" id="CHEBI:15378"/>
        <dbReference type="ChEBI" id="CHEBI:57856"/>
        <dbReference type="ChEBI" id="CHEBI:59789"/>
        <dbReference type="ChEBI" id="CHEBI:74495"/>
        <dbReference type="ChEBI" id="CHEBI:82748"/>
        <dbReference type="EC" id="2.1.1.186"/>
    </reaction>
</comment>
<comment type="subunit">
    <text evidence="1">Monomer.</text>
</comment>
<comment type="subcellular location">
    <subcellularLocation>
        <location evidence="1">Cytoplasm</location>
    </subcellularLocation>
</comment>
<comment type="similarity">
    <text evidence="1">Belongs to the class I-like SAM-binding methyltransferase superfamily. RNA methyltransferase RlmE family. RlmM subfamily.</text>
</comment>
<gene>
    <name evidence="1" type="primary">rlmM</name>
    <name type="ordered locus">Maqu_1781</name>
</gene>
<evidence type="ECO:0000255" key="1">
    <source>
        <dbReference type="HAMAP-Rule" id="MF_01551"/>
    </source>
</evidence>
<accession>A1U1J4</accession>
<organism>
    <name type="scientific">Marinobacter nauticus (strain ATCC 700491 / DSM 11845 / VT8)</name>
    <name type="common">Marinobacter aquaeolei</name>
    <dbReference type="NCBI Taxonomy" id="351348"/>
    <lineage>
        <taxon>Bacteria</taxon>
        <taxon>Pseudomonadati</taxon>
        <taxon>Pseudomonadota</taxon>
        <taxon>Gammaproteobacteria</taxon>
        <taxon>Pseudomonadales</taxon>
        <taxon>Marinobacteraceae</taxon>
        <taxon>Marinobacter</taxon>
    </lineage>
</organism>
<proteinExistence type="inferred from homology"/>
<protein>
    <recommendedName>
        <fullName evidence="1">Ribosomal RNA large subunit methyltransferase M</fullName>
        <ecNumber evidence="1">2.1.1.186</ecNumber>
    </recommendedName>
    <alternativeName>
        <fullName evidence="1">23S rRNA (cytidine2498-2'-O)-methyltransferase</fullName>
    </alternativeName>
    <alternativeName>
        <fullName evidence="1">23S rRNA 2'-O-ribose methyltransferase RlmM</fullName>
    </alternativeName>
</protein>
<feature type="chain" id="PRO_0000314522" description="Ribosomal RNA large subunit methyltransferase M">
    <location>
        <begin position="1"/>
        <end position="358"/>
    </location>
</feature>
<feature type="active site" description="Proton acceptor" evidence="1">
    <location>
        <position position="308"/>
    </location>
</feature>
<feature type="binding site" evidence="1">
    <location>
        <position position="191"/>
    </location>
    <ligand>
        <name>S-adenosyl-L-methionine</name>
        <dbReference type="ChEBI" id="CHEBI:59789"/>
    </ligand>
</feature>
<feature type="binding site" evidence="1">
    <location>
        <begin position="224"/>
        <end position="227"/>
    </location>
    <ligand>
        <name>S-adenosyl-L-methionine</name>
        <dbReference type="ChEBI" id="CHEBI:59789"/>
    </ligand>
</feature>
<feature type="binding site" evidence="1">
    <location>
        <position position="243"/>
    </location>
    <ligand>
        <name>S-adenosyl-L-methionine</name>
        <dbReference type="ChEBI" id="CHEBI:59789"/>
    </ligand>
</feature>
<feature type="binding site" evidence="1">
    <location>
        <position position="263"/>
    </location>
    <ligand>
        <name>S-adenosyl-L-methionine</name>
        <dbReference type="ChEBI" id="CHEBI:59789"/>
    </ligand>
</feature>
<feature type="binding site" evidence="1">
    <location>
        <position position="279"/>
    </location>
    <ligand>
        <name>S-adenosyl-L-methionine</name>
        <dbReference type="ChEBI" id="CHEBI:59789"/>
    </ligand>
</feature>
<name>RLMM_MARN8</name>